<organism>
    <name type="scientific">Mus musculus</name>
    <name type="common">Mouse</name>
    <dbReference type="NCBI Taxonomy" id="10090"/>
    <lineage>
        <taxon>Eukaryota</taxon>
        <taxon>Metazoa</taxon>
        <taxon>Chordata</taxon>
        <taxon>Craniata</taxon>
        <taxon>Vertebrata</taxon>
        <taxon>Euteleostomi</taxon>
        <taxon>Mammalia</taxon>
        <taxon>Eutheria</taxon>
        <taxon>Euarchontoglires</taxon>
        <taxon>Glires</taxon>
        <taxon>Rodentia</taxon>
        <taxon>Myomorpha</taxon>
        <taxon>Muroidea</taxon>
        <taxon>Muridae</taxon>
        <taxon>Murinae</taxon>
        <taxon>Mus</taxon>
        <taxon>Mus</taxon>
    </lineage>
</organism>
<reference key="1">
    <citation type="journal article" date="2001" name="Arch. Biochem. Biophys.">
        <title>Gene structure and expression of the targeting subunit, RGL, of the muscle-specific glycogen-associated type 1 protein phosphatase, PP1G.</title>
        <authorList>
            <person name="Lanner C."/>
            <person name="Suzuki Y."/>
            <person name="Bi C."/>
            <person name="Zhang H."/>
            <person name="Cooper L.D."/>
            <person name="Bowker-Kinley M.M."/>
            <person name="DePaoli-Roach A.A."/>
        </authorList>
    </citation>
    <scope>NUCLEOTIDE SEQUENCE [GENOMIC DNA]</scope>
    <scope>TISSUE SPECIFICITY</scope>
    <source>
        <strain>129/Sv</strain>
    </source>
</reference>
<reference key="2">
    <citation type="submission" date="2005-09" db="EMBL/GenBank/DDBJ databases">
        <authorList>
            <person name="Mural R.J."/>
            <person name="Adams M.D."/>
            <person name="Myers E.W."/>
            <person name="Smith H.O."/>
            <person name="Venter J.C."/>
        </authorList>
    </citation>
    <scope>NUCLEOTIDE SEQUENCE [LARGE SCALE GENOMIC DNA]</scope>
</reference>
<reference key="3">
    <citation type="journal article" date="2004" name="Genome Res.">
        <title>The status, quality, and expansion of the NIH full-length cDNA project: the Mammalian Gene Collection (MGC).</title>
        <authorList>
            <consortium name="The MGC Project Team"/>
        </authorList>
    </citation>
    <scope>NUCLEOTIDE SEQUENCE [LARGE SCALE MRNA]</scope>
</reference>
<reference key="4">
    <citation type="journal article" date="2005" name="Science">
        <title>The transcriptional landscape of the mammalian genome.</title>
        <authorList>
            <person name="Carninci P."/>
            <person name="Kasukawa T."/>
            <person name="Katayama S."/>
            <person name="Gough J."/>
            <person name="Frith M.C."/>
            <person name="Maeda N."/>
            <person name="Oyama R."/>
            <person name="Ravasi T."/>
            <person name="Lenhard B."/>
            <person name="Wells C."/>
            <person name="Kodzius R."/>
            <person name="Shimokawa K."/>
            <person name="Bajic V.B."/>
            <person name="Brenner S.E."/>
            <person name="Batalov S."/>
            <person name="Forrest A.R."/>
            <person name="Zavolan M."/>
            <person name="Davis M.J."/>
            <person name="Wilming L.G."/>
            <person name="Aidinis V."/>
            <person name="Allen J.E."/>
            <person name="Ambesi-Impiombato A."/>
            <person name="Apweiler R."/>
            <person name="Aturaliya R.N."/>
            <person name="Bailey T.L."/>
            <person name="Bansal M."/>
            <person name="Baxter L."/>
            <person name="Beisel K.W."/>
            <person name="Bersano T."/>
            <person name="Bono H."/>
            <person name="Chalk A.M."/>
            <person name="Chiu K.P."/>
            <person name="Choudhary V."/>
            <person name="Christoffels A."/>
            <person name="Clutterbuck D.R."/>
            <person name="Crowe M.L."/>
            <person name="Dalla E."/>
            <person name="Dalrymple B.P."/>
            <person name="de Bono B."/>
            <person name="Della Gatta G."/>
            <person name="di Bernardo D."/>
            <person name="Down T."/>
            <person name="Engstrom P."/>
            <person name="Fagiolini M."/>
            <person name="Faulkner G."/>
            <person name="Fletcher C.F."/>
            <person name="Fukushima T."/>
            <person name="Furuno M."/>
            <person name="Futaki S."/>
            <person name="Gariboldi M."/>
            <person name="Georgii-Hemming P."/>
            <person name="Gingeras T.R."/>
            <person name="Gojobori T."/>
            <person name="Green R.E."/>
            <person name="Gustincich S."/>
            <person name="Harbers M."/>
            <person name="Hayashi Y."/>
            <person name="Hensch T.K."/>
            <person name="Hirokawa N."/>
            <person name="Hill D."/>
            <person name="Huminiecki L."/>
            <person name="Iacono M."/>
            <person name="Ikeo K."/>
            <person name="Iwama A."/>
            <person name="Ishikawa T."/>
            <person name="Jakt M."/>
            <person name="Kanapin A."/>
            <person name="Katoh M."/>
            <person name="Kawasawa Y."/>
            <person name="Kelso J."/>
            <person name="Kitamura H."/>
            <person name="Kitano H."/>
            <person name="Kollias G."/>
            <person name="Krishnan S.P."/>
            <person name="Kruger A."/>
            <person name="Kummerfeld S.K."/>
            <person name="Kurochkin I.V."/>
            <person name="Lareau L.F."/>
            <person name="Lazarevic D."/>
            <person name="Lipovich L."/>
            <person name="Liu J."/>
            <person name="Liuni S."/>
            <person name="McWilliam S."/>
            <person name="Madan Babu M."/>
            <person name="Madera M."/>
            <person name="Marchionni L."/>
            <person name="Matsuda H."/>
            <person name="Matsuzawa S."/>
            <person name="Miki H."/>
            <person name="Mignone F."/>
            <person name="Miyake S."/>
            <person name="Morris K."/>
            <person name="Mottagui-Tabar S."/>
            <person name="Mulder N."/>
            <person name="Nakano N."/>
            <person name="Nakauchi H."/>
            <person name="Ng P."/>
            <person name="Nilsson R."/>
            <person name="Nishiguchi S."/>
            <person name="Nishikawa S."/>
            <person name="Nori F."/>
            <person name="Ohara O."/>
            <person name="Okazaki Y."/>
            <person name="Orlando V."/>
            <person name="Pang K.C."/>
            <person name="Pavan W.J."/>
            <person name="Pavesi G."/>
            <person name="Pesole G."/>
            <person name="Petrovsky N."/>
            <person name="Piazza S."/>
            <person name="Reed J."/>
            <person name="Reid J.F."/>
            <person name="Ring B.Z."/>
            <person name="Ringwald M."/>
            <person name="Rost B."/>
            <person name="Ruan Y."/>
            <person name="Salzberg S.L."/>
            <person name="Sandelin A."/>
            <person name="Schneider C."/>
            <person name="Schoenbach C."/>
            <person name="Sekiguchi K."/>
            <person name="Semple C.A."/>
            <person name="Seno S."/>
            <person name="Sessa L."/>
            <person name="Sheng Y."/>
            <person name="Shibata Y."/>
            <person name="Shimada H."/>
            <person name="Shimada K."/>
            <person name="Silva D."/>
            <person name="Sinclair B."/>
            <person name="Sperling S."/>
            <person name="Stupka E."/>
            <person name="Sugiura K."/>
            <person name="Sultana R."/>
            <person name="Takenaka Y."/>
            <person name="Taki K."/>
            <person name="Tammoja K."/>
            <person name="Tan S.L."/>
            <person name="Tang S."/>
            <person name="Taylor M.S."/>
            <person name="Tegner J."/>
            <person name="Teichmann S.A."/>
            <person name="Ueda H.R."/>
            <person name="van Nimwegen E."/>
            <person name="Verardo R."/>
            <person name="Wei C.L."/>
            <person name="Yagi K."/>
            <person name="Yamanishi H."/>
            <person name="Zabarovsky E."/>
            <person name="Zhu S."/>
            <person name="Zimmer A."/>
            <person name="Hide W."/>
            <person name="Bult C."/>
            <person name="Grimmond S.M."/>
            <person name="Teasdale R.D."/>
            <person name="Liu E.T."/>
            <person name="Brusic V."/>
            <person name="Quackenbush J."/>
            <person name="Wahlestedt C."/>
            <person name="Mattick J.S."/>
            <person name="Hume D.A."/>
            <person name="Kai C."/>
            <person name="Sasaki D."/>
            <person name="Tomaru Y."/>
            <person name="Fukuda S."/>
            <person name="Kanamori-Katayama M."/>
            <person name="Suzuki M."/>
            <person name="Aoki J."/>
            <person name="Arakawa T."/>
            <person name="Iida J."/>
            <person name="Imamura K."/>
            <person name="Itoh M."/>
            <person name="Kato T."/>
            <person name="Kawaji H."/>
            <person name="Kawagashira N."/>
            <person name="Kawashima T."/>
            <person name="Kojima M."/>
            <person name="Kondo S."/>
            <person name="Konno H."/>
            <person name="Nakano K."/>
            <person name="Ninomiya N."/>
            <person name="Nishio T."/>
            <person name="Okada M."/>
            <person name="Plessy C."/>
            <person name="Shibata K."/>
            <person name="Shiraki T."/>
            <person name="Suzuki S."/>
            <person name="Tagami M."/>
            <person name="Waki K."/>
            <person name="Watahiki A."/>
            <person name="Okamura-Oho Y."/>
            <person name="Suzuki H."/>
            <person name="Kawai J."/>
            <person name="Hayashizaki Y."/>
        </authorList>
    </citation>
    <scope>NUCLEOTIDE SEQUENCE [LARGE SCALE MRNA] OF 1-626</scope>
    <source>
        <strain>C57BL/6J</strain>
        <tissue>Embryonic heart</tissue>
    </source>
</reference>
<reference key="5">
    <citation type="submission" date="2009-01" db="UniProtKB">
        <authorList>
            <person name="Lubec G."/>
            <person name="Sunyer B."/>
            <person name="Chen W.-Q."/>
        </authorList>
    </citation>
    <scope>PROTEIN SEQUENCE OF 259-264</scope>
    <scope>IDENTIFICATION BY MASS SPECTROMETRY</scope>
    <source>
        <strain>OF1</strain>
        <tissue>Hippocampus</tissue>
    </source>
</reference>
<reference key="6">
    <citation type="journal article" date="2001" name="Mol. Cell. Biol.">
        <title>Insulin control of glycogen metabolism in knockout mice lacking the muscle-specific protein phosphatase PP1G/RGL.</title>
        <authorList>
            <person name="Suzuki Y."/>
            <person name="Lanner C."/>
            <person name="Kim J.-H."/>
            <person name="Vilardo P.G."/>
            <person name="Zhang H."/>
            <person name="Yang J."/>
            <person name="Cooper L.D."/>
            <person name="Steele M."/>
            <person name="Kennedy A."/>
            <person name="Bock C.B."/>
            <person name="Scrimgeour A."/>
            <person name="Lawrence J.C. Jr."/>
            <person name="DePaoli-Roach A.A."/>
        </authorList>
    </citation>
    <scope>FUNCTION</scope>
    <source>
        <strain>129/Sv</strain>
    </source>
</reference>
<reference key="7">
    <citation type="journal article" date="2010" name="Cell">
        <title>A tissue-specific atlas of mouse protein phosphorylation and expression.</title>
        <authorList>
            <person name="Huttlin E.L."/>
            <person name="Jedrychowski M.P."/>
            <person name="Elias J.E."/>
            <person name="Goswami T."/>
            <person name="Rad R."/>
            <person name="Beausoleil S.A."/>
            <person name="Villen J."/>
            <person name="Haas W."/>
            <person name="Sowa M.E."/>
            <person name="Gygi S.P."/>
        </authorList>
    </citation>
    <scope>PHOSPHORYLATION [LARGE SCALE ANALYSIS] AT SER-48; SER-51; THR-58 AND SER-821</scope>
    <scope>IDENTIFICATION BY MASS SPECTROMETRY [LARGE SCALE ANALYSIS]</scope>
    <source>
        <tissue>Brown adipose tissue</tissue>
        <tissue>Heart</tissue>
        <tissue>Lung</tissue>
    </source>
</reference>
<proteinExistence type="evidence at protein level"/>
<name>PPR3A_MOUSE</name>
<feature type="chain" id="PRO_0000071501" description="Protein phosphatase 1 regulatory subunit 3A">
    <location>
        <begin position="1"/>
        <end position="1089"/>
    </location>
</feature>
<feature type="transmembrane region" description="Helical" evidence="3">
    <location>
        <begin position="1047"/>
        <end position="1067"/>
    </location>
</feature>
<feature type="domain" description="CBM21" evidence="4">
    <location>
        <begin position="123"/>
        <end position="231"/>
    </location>
</feature>
<feature type="region of interest" description="Disordered" evidence="5">
    <location>
        <begin position="32"/>
        <end position="57"/>
    </location>
</feature>
<feature type="region of interest" description="Disordered" evidence="5">
    <location>
        <begin position="385"/>
        <end position="420"/>
    </location>
</feature>
<feature type="region of interest" description="Disordered" evidence="5">
    <location>
        <begin position="479"/>
        <end position="501"/>
    </location>
</feature>
<feature type="region of interest" description="Disordered" evidence="5">
    <location>
        <begin position="566"/>
        <end position="649"/>
    </location>
</feature>
<feature type="region of interest" description="Disordered" evidence="5">
    <location>
        <begin position="949"/>
        <end position="968"/>
    </location>
</feature>
<feature type="short sequence motif" description="PP1-binding motif">
    <location>
        <begin position="64"/>
        <end position="67"/>
    </location>
</feature>
<feature type="compositionally biased region" description="Low complexity" evidence="5">
    <location>
        <begin position="37"/>
        <end position="51"/>
    </location>
</feature>
<feature type="compositionally biased region" description="Polar residues" evidence="5">
    <location>
        <begin position="581"/>
        <end position="600"/>
    </location>
</feature>
<feature type="compositionally biased region" description="Basic and acidic residues" evidence="5">
    <location>
        <begin position="602"/>
        <end position="614"/>
    </location>
</feature>
<feature type="compositionally biased region" description="Polar residues" evidence="5">
    <location>
        <begin position="615"/>
        <end position="625"/>
    </location>
</feature>
<feature type="compositionally biased region" description="Gly residues" evidence="5">
    <location>
        <begin position="953"/>
        <end position="962"/>
    </location>
</feature>
<feature type="modified residue" description="Phosphoserine; by GSK3" evidence="2">
    <location>
        <position position="40"/>
    </location>
</feature>
<feature type="modified residue" description="Phosphoserine; by GSK3" evidence="2">
    <location>
        <position position="44"/>
    </location>
</feature>
<feature type="modified residue" description="Phosphoserine" evidence="9">
    <location>
        <position position="48"/>
    </location>
</feature>
<feature type="modified residue" description="Phosphoserine" evidence="9">
    <location>
        <position position="51"/>
    </location>
</feature>
<feature type="modified residue" description="Phosphothreonine" evidence="9">
    <location>
        <position position="58"/>
    </location>
</feature>
<feature type="modified residue" description="Phosphoserine; by PKA" evidence="2">
    <location>
        <position position="67"/>
    </location>
</feature>
<feature type="modified residue" description="Phosphoserine" evidence="9">
    <location>
        <position position="821"/>
    </location>
</feature>
<feature type="sequence conflict" description="In Ref. 1; AAK31072." evidence="8" ref="1">
    <original>G</original>
    <variation>S</variation>
    <location>
        <position position="959"/>
    </location>
</feature>
<protein>
    <recommendedName>
        <fullName>Protein phosphatase 1 regulatory subunit 3A</fullName>
    </recommendedName>
    <alternativeName>
        <fullName>Protein phosphatase 1 glycogen-associated regulatory subunit</fullName>
    </alternativeName>
    <alternativeName>
        <fullName>Protein phosphatase type-1 glycogen targeting subunit</fullName>
        <shortName>RG1</shortName>
    </alternativeName>
</protein>
<dbReference type="EMBL" id="AF309629">
    <property type="protein sequence ID" value="AAK31072.1"/>
    <property type="molecule type" value="Genomic_DNA"/>
</dbReference>
<dbReference type="EMBL" id="AF309628">
    <property type="protein sequence ID" value="AAK31072.1"/>
    <property type="status" value="JOINED"/>
    <property type="molecule type" value="Genomic_DNA"/>
</dbReference>
<dbReference type="EMBL" id="CH466533">
    <property type="protein sequence ID" value="EDL13902.1"/>
    <property type="molecule type" value="Genomic_DNA"/>
</dbReference>
<dbReference type="EMBL" id="BC109007">
    <property type="protein sequence ID" value="AAI09008.1"/>
    <property type="molecule type" value="mRNA"/>
</dbReference>
<dbReference type="EMBL" id="AK084518">
    <property type="protein sequence ID" value="BAC39208.2"/>
    <property type="molecule type" value="mRNA"/>
</dbReference>
<dbReference type="EMBL" id="AK084719">
    <property type="protein sequence ID" value="BAC39262.2"/>
    <property type="molecule type" value="mRNA"/>
</dbReference>
<dbReference type="CCDS" id="CCDS19917.1"/>
<dbReference type="RefSeq" id="NP_536712.2">
    <property type="nucleotide sequence ID" value="NM_080464.2"/>
</dbReference>
<dbReference type="SMR" id="Q99MR9"/>
<dbReference type="BioGRID" id="228264">
    <property type="interactions" value="12"/>
</dbReference>
<dbReference type="FunCoup" id="Q99MR9">
    <property type="interactions" value="44"/>
</dbReference>
<dbReference type="IntAct" id="Q99MR9">
    <property type="interactions" value="3"/>
</dbReference>
<dbReference type="STRING" id="10090.ENSMUSP00000049054"/>
<dbReference type="CAZy" id="CBM21">
    <property type="family name" value="Carbohydrate-Binding Module Family 21"/>
</dbReference>
<dbReference type="GlyGen" id="Q99MR9">
    <property type="glycosylation" value="1 site, 1 O-linked glycan (1 site)"/>
</dbReference>
<dbReference type="iPTMnet" id="Q99MR9"/>
<dbReference type="PhosphoSitePlus" id="Q99MR9"/>
<dbReference type="jPOST" id="Q99MR9"/>
<dbReference type="PaxDb" id="10090-ENSMUSP00000049054"/>
<dbReference type="ProteomicsDB" id="291839"/>
<dbReference type="Antibodypedia" id="45888">
    <property type="antibodies" value="140 antibodies from 24 providers"/>
</dbReference>
<dbReference type="DNASU" id="140491"/>
<dbReference type="Ensembl" id="ENSMUST00000045096.6">
    <property type="protein sequence ID" value="ENSMUSP00000049054.5"/>
    <property type="gene ID" value="ENSMUSG00000042717.6"/>
</dbReference>
<dbReference type="GeneID" id="140491"/>
<dbReference type="KEGG" id="mmu:140491"/>
<dbReference type="UCSC" id="uc009ayw.1">
    <property type="organism name" value="mouse"/>
</dbReference>
<dbReference type="AGR" id="MGI:2153588"/>
<dbReference type="CTD" id="5506"/>
<dbReference type="MGI" id="MGI:2153588">
    <property type="gene designation" value="Ppp1r3a"/>
</dbReference>
<dbReference type="VEuPathDB" id="HostDB:ENSMUSG00000042717"/>
<dbReference type="eggNOG" id="KOG3986">
    <property type="taxonomic scope" value="Eukaryota"/>
</dbReference>
<dbReference type="GeneTree" id="ENSGT00940000157682"/>
<dbReference type="HOGENOM" id="CLU_009399_0_0_1"/>
<dbReference type="InParanoid" id="Q99MR9"/>
<dbReference type="OMA" id="DCWELPS"/>
<dbReference type="OrthoDB" id="1881at2759"/>
<dbReference type="PhylomeDB" id="Q99MR9"/>
<dbReference type="TreeFam" id="TF105537"/>
<dbReference type="BioGRID-ORCS" id="140491">
    <property type="hits" value="1 hit in 79 CRISPR screens"/>
</dbReference>
<dbReference type="ChiTaRS" id="Ppp1r3a">
    <property type="organism name" value="mouse"/>
</dbReference>
<dbReference type="PRO" id="PR:Q99MR9"/>
<dbReference type="Proteomes" id="UP000000589">
    <property type="component" value="Chromosome 6"/>
</dbReference>
<dbReference type="RNAct" id="Q99MR9">
    <property type="molecule type" value="protein"/>
</dbReference>
<dbReference type="Bgee" id="ENSMUSG00000042717">
    <property type="expression patterns" value="Expressed in interventricular septum and 34 other cell types or tissues"/>
</dbReference>
<dbReference type="GO" id="GO:0016020">
    <property type="term" value="C:membrane"/>
    <property type="evidence" value="ECO:0007669"/>
    <property type="project" value="UniProtKB-SubCell"/>
</dbReference>
<dbReference type="GO" id="GO:0004722">
    <property type="term" value="F:protein serine/threonine phosphatase activity"/>
    <property type="evidence" value="ECO:0000266"/>
    <property type="project" value="MGI"/>
</dbReference>
<dbReference type="GO" id="GO:0005977">
    <property type="term" value="P:glycogen metabolic process"/>
    <property type="evidence" value="ECO:0000304"/>
    <property type="project" value="MGI"/>
</dbReference>
<dbReference type="CDD" id="cd22255">
    <property type="entry name" value="PBD_PPP1R3A"/>
    <property type="match status" value="1"/>
</dbReference>
<dbReference type="Gene3D" id="2.60.40.2440">
    <property type="entry name" value="Carbohydrate binding type-21 domain"/>
    <property type="match status" value="1"/>
</dbReference>
<dbReference type="InterPro" id="IPR005036">
    <property type="entry name" value="CBM21_dom"/>
</dbReference>
<dbReference type="InterPro" id="IPR038175">
    <property type="entry name" value="CBM21_dom_sf"/>
</dbReference>
<dbReference type="InterPro" id="IPR050782">
    <property type="entry name" value="PP1_regulatory_subunit_3"/>
</dbReference>
<dbReference type="PANTHER" id="PTHR12307">
    <property type="entry name" value="PROTEIN PHOSPHATASE 1 REGULATORY SUBUNIT"/>
    <property type="match status" value="1"/>
</dbReference>
<dbReference type="PANTHER" id="PTHR12307:SF2">
    <property type="entry name" value="PROTEIN PHOSPHATASE 1 REGULATORY SUBUNIT 3A"/>
    <property type="match status" value="1"/>
</dbReference>
<dbReference type="Pfam" id="PF03370">
    <property type="entry name" value="CBM_21"/>
    <property type="match status" value="1"/>
</dbReference>
<dbReference type="PROSITE" id="PS51159">
    <property type="entry name" value="CBM21"/>
    <property type="match status" value="1"/>
</dbReference>
<comment type="function">
    <text evidence="6">Seems to act as a glycogen-targeting subunit for PP1. PP1 is essential for cell division, and participates in the regulation of glycogen metabolism, muscle contractility and protein synthesis. Plays an important role in glycogen synthesis but is not essential for insulin activation of glycogen synthase.</text>
</comment>
<comment type="subunit">
    <text evidence="1">Interacts with PPP1CC catalytic subunit of PP1, and associates with glycogen.</text>
</comment>
<comment type="subcellular location">
    <subcellularLocation>
        <location evidence="1">Membrane</location>
        <topology evidence="1">Single-pass membrane protein</topology>
    </subcellularLocation>
</comment>
<comment type="tissue specificity">
    <text evidence="7">Skeletal muscle and heart.</text>
</comment>
<comment type="domain">
    <text>The CBM21 domain is known to be involved in the localization to glycogen and is characteristic of some regulatory subunit of phosphatase complexes.</text>
</comment>
<comment type="PTM">
    <text evidence="1">Phosphorylation at Ser-48 by ISPK stimulates the dephosphorylation of glycogen synthase and phosphorylase kinase.</text>
</comment>
<evidence type="ECO:0000250" key="1"/>
<evidence type="ECO:0000250" key="2">
    <source>
        <dbReference type="UniProtKB" id="Q00756"/>
    </source>
</evidence>
<evidence type="ECO:0000255" key="3"/>
<evidence type="ECO:0000255" key="4">
    <source>
        <dbReference type="PROSITE-ProRule" id="PRU00491"/>
    </source>
</evidence>
<evidence type="ECO:0000256" key="5">
    <source>
        <dbReference type="SAM" id="MobiDB-lite"/>
    </source>
</evidence>
<evidence type="ECO:0000269" key="6">
    <source>
    </source>
</evidence>
<evidence type="ECO:0000269" key="7">
    <source>
    </source>
</evidence>
<evidence type="ECO:0000305" key="8"/>
<evidence type="ECO:0007744" key="9">
    <source>
    </source>
</evidence>
<keyword id="KW-0119">Carbohydrate metabolism</keyword>
<keyword id="KW-0903">Direct protein sequencing</keyword>
<keyword id="KW-0321">Glycogen metabolism</keyword>
<keyword id="KW-0472">Membrane</keyword>
<keyword id="KW-0597">Phosphoprotein</keyword>
<keyword id="KW-1185">Reference proteome</keyword>
<keyword id="KW-0812">Transmembrane</keyword>
<keyword id="KW-1133">Transmembrane helix</keyword>
<accession>Q99MR9</accession>
<accession>Q32MS0</accession>
<accession>Q8BUJ4</accession>
<accession>Q8BUL0</accession>
<sequence>MEPAEEPGQISKDNFLEVPNLSDSVCEDEEVKATFKPGFSPQPSRRGSGSSEDMYLDTPTSASRRVSFADSLGFSLVSVKEFDCWELPSVSTDFDLSGDVFHTDEYVLSPLFDLPSSKEKLMEQLQVQKAVLESAEHLPGSSMKGIIRVLNISFEKLVYVRMSLDDWQTHYDILAEYVPNSCDGETDQFSFKISLVPPYQKEGGKVEFCIRYETSAGTFWSNNNGTNYILVCQKKRKEPEPVKPLEEAPSRQIKGCLKVKSRSKEEPLLAPEENKFETLKFTESYIPTIICSHEDKDDLGANHPNVDDINKKHDEHNGKELDLMINQRLITSQDEKNTFATDTVNFTNKAEGSEKKQAYHEINTDLFMGPLSPSLSAESSLKRDFYHSRSSSPGNEYGHPHSEEIISDMGEKGPSLGDTSSDELMQLELCSKEDLDDNANPANGSGRVCSSFDQRMACGLKNNEAGIKKTGIQDYKYSHGDSTKLEESNASSRDDYAKVDNKKEKQTCLGVNENPSKNFQSVFQTQEGHMGYPKISTEGDKANNQDLTSLLSKDITANTWAVTVDPCPSTNAKRSWREVGSGSNLEPGTSDLSSPRNFSPLTDDHLFQADRENSDSSNPENQNMNTRHRKKWNVLETQSETSETESDIAKHTKEQAEYKDMWEKTDNSRNLKATPTEHLFTCRETECYGLSSLADHGITEKAQAVTAYIIKTTLESTPESASARGKAIIAKLPQETAGNDRPIEVKETAFDPHEGRKDDSHYSLCHGDTAGVIHDNDFERESHLDICNLRVDEMKKEKTTSTCFPQKTYDKEKHGIGSVTSIDEPSQVITGNQKATSKLDLHLGVLPTDRAIFQANADLELLQELSRRTDFNAVPSAFNSDTASASRDSSQVYRHCSKKSVPSYGEEKAVTNTTLQSIPTKSEYNWHPESEVLGHAMSKPEDVFKSSEIMKSGSGGERGGGPILQQKEGSLENSQGPMFFTNEPLENLDEASSENEGLMHSGQSQCYLGDKGLVSSASATVSTQELEAQGRESLLSISTNSKIPYFLLFLIFLATVYYYDLMIGLAFYLFSLYWLYWEGGRQRESVKKK</sequence>
<gene>
    <name type="primary">Ppp1r3a</name>
    <name type="synonym">Pp1g</name>
</gene>